<evidence type="ECO:0000255" key="1">
    <source>
        <dbReference type="HAMAP-Rule" id="MF_00125"/>
    </source>
</evidence>
<reference key="1">
    <citation type="journal article" date="2006" name="Genome Biol.">
        <title>The genome of Rhizobium leguminosarum has recognizable core and accessory components.</title>
        <authorList>
            <person name="Young J.P.W."/>
            <person name="Crossman L.C."/>
            <person name="Johnston A.W.B."/>
            <person name="Thomson N.R."/>
            <person name="Ghazoui Z.F."/>
            <person name="Hull K.H."/>
            <person name="Wexler M."/>
            <person name="Curson A.R.J."/>
            <person name="Todd J.D."/>
            <person name="Poole P.S."/>
            <person name="Mauchline T.H."/>
            <person name="East A.K."/>
            <person name="Quail M.A."/>
            <person name="Churcher C."/>
            <person name="Arrowsmith C."/>
            <person name="Cherevach I."/>
            <person name="Chillingworth T."/>
            <person name="Clarke K."/>
            <person name="Cronin A."/>
            <person name="Davis P."/>
            <person name="Fraser A."/>
            <person name="Hance Z."/>
            <person name="Hauser H."/>
            <person name="Jagels K."/>
            <person name="Moule S."/>
            <person name="Mungall K."/>
            <person name="Norbertczak H."/>
            <person name="Rabbinowitsch E."/>
            <person name="Sanders M."/>
            <person name="Simmonds M."/>
            <person name="Whitehead S."/>
            <person name="Parkhill J."/>
        </authorList>
    </citation>
    <scope>NUCLEOTIDE SEQUENCE [LARGE SCALE GENOMIC DNA]</scope>
    <source>
        <strain>DSM 114642 / LMG 32736 / 3841</strain>
    </source>
</reference>
<accession>Q1MKX9</accession>
<protein>
    <recommendedName>
        <fullName evidence="1">ATP phosphoribosyltransferase regulatory subunit</fullName>
    </recommendedName>
</protein>
<organism>
    <name type="scientific">Rhizobium johnstonii (strain DSM 114642 / LMG 32736 / 3841)</name>
    <name type="common">Rhizobium leguminosarum bv. viciae</name>
    <dbReference type="NCBI Taxonomy" id="216596"/>
    <lineage>
        <taxon>Bacteria</taxon>
        <taxon>Pseudomonadati</taxon>
        <taxon>Pseudomonadota</taxon>
        <taxon>Alphaproteobacteria</taxon>
        <taxon>Hyphomicrobiales</taxon>
        <taxon>Rhizobiaceae</taxon>
        <taxon>Rhizobium/Agrobacterium group</taxon>
        <taxon>Rhizobium</taxon>
        <taxon>Rhizobium johnstonii</taxon>
    </lineage>
</organism>
<gene>
    <name evidence="1" type="primary">hisZ</name>
    <name type="ordered locus">RL0878</name>
</gene>
<feature type="chain" id="PRO_1000016283" description="ATP phosphoribosyltransferase regulatory subunit">
    <location>
        <begin position="1"/>
        <end position="373"/>
    </location>
</feature>
<comment type="function">
    <text evidence="1">Required for the first step of histidine biosynthesis. May allow the feedback regulation of ATP phosphoribosyltransferase activity by histidine.</text>
</comment>
<comment type="pathway">
    <text evidence="1">Amino-acid biosynthesis; L-histidine biosynthesis; L-histidine from 5-phospho-alpha-D-ribose 1-diphosphate: step 1/9.</text>
</comment>
<comment type="subunit">
    <text evidence="1">Heteromultimer composed of HisG and HisZ subunits.</text>
</comment>
<comment type="subcellular location">
    <subcellularLocation>
        <location evidence="1">Cytoplasm</location>
    </subcellularLocation>
</comment>
<comment type="miscellaneous">
    <text>This function is generally fulfilled by the C-terminal part of HisG, which is missing in some bacteria such as this one.</text>
</comment>
<comment type="similarity">
    <text evidence="1">Belongs to the class-II aminoacyl-tRNA synthetase family. HisZ subfamily.</text>
</comment>
<dbReference type="EMBL" id="AM236080">
    <property type="protein sequence ID" value="CAK06375.1"/>
    <property type="molecule type" value="Genomic_DNA"/>
</dbReference>
<dbReference type="RefSeq" id="WP_011650623.1">
    <property type="nucleotide sequence ID" value="NC_008380.1"/>
</dbReference>
<dbReference type="SMR" id="Q1MKX9"/>
<dbReference type="EnsemblBacteria" id="CAK06375">
    <property type="protein sequence ID" value="CAK06375"/>
    <property type="gene ID" value="RL0878"/>
</dbReference>
<dbReference type="KEGG" id="rle:RL0878"/>
<dbReference type="eggNOG" id="COG3705">
    <property type="taxonomic scope" value="Bacteria"/>
</dbReference>
<dbReference type="HOGENOM" id="CLU_025113_6_0_5"/>
<dbReference type="UniPathway" id="UPA00031">
    <property type="reaction ID" value="UER00006"/>
</dbReference>
<dbReference type="Proteomes" id="UP000006575">
    <property type="component" value="Chromosome"/>
</dbReference>
<dbReference type="GO" id="GO:0005737">
    <property type="term" value="C:cytoplasm"/>
    <property type="evidence" value="ECO:0007669"/>
    <property type="project" value="UniProtKB-SubCell"/>
</dbReference>
<dbReference type="GO" id="GO:0004821">
    <property type="term" value="F:histidine-tRNA ligase activity"/>
    <property type="evidence" value="ECO:0007669"/>
    <property type="project" value="TreeGrafter"/>
</dbReference>
<dbReference type="GO" id="GO:0006427">
    <property type="term" value="P:histidyl-tRNA aminoacylation"/>
    <property type="evidence" value="ECO:0007669"/>
    <property type="project" value="TreeGrafter"/>
</dbReference>
<dbReference type="GO" id="GO:0000105">
    <property type="term" value="P:L-histidine biosynthetic process"/>
    <property type="evidence" value="ECO:0007669"/>
    <property type="project" value="UniProtKB-UniRule"/>
</dbReference>
<dbReference type="Gene3D" id="3.30.930.10">
    <property type="entry name" value="Bira Bifunctional Protein, Domain 2"/>
    <property type="match status" value="1"/>
</dbReference>
<dbReference type="HAMAP" id="MF_00125">
    <property type="entry name" value="HisZ"/>
    <property type="match status" value="1"/>
</dbReference>
<dbReference type="InterPro" id="IPR006195">
    <property type="entry name" value="aa-tRNA-synth_II"/>
</dbReference>
<dbReference type="InterPro" id="IPR045864">
    <property type="entry name" value="aa-tRNA-synth_II/BPL/LPL"/>
</dbReference>
<dbReference type="InterPro" id="IPR041715">
    <property type="entry name" value="HisRS-like_core"/>
</dbReference>
<dbReference type="InterPro" id="IPR004516">
    <property type="entry name" value="HisRS/HisZ"/>
</dbReference>
<dbReference type="InterPro" id="IPR004517">
    <property type="entry name" value="HisZ"/>
</dbReference>
<dbReference type="NCBIfam" id="NF008951">
    <property type="entry name" value="PRK12295.1-4"/>
    <property type="match status" value="1"/>
</dbReference>
<dbReference type="PANTHER" id="PTHR43707:SF1">
    <property type="entry name" value="HISTIDINE--TRNA LIGASE, MITOCHONDRIAL-RELATED"/>
    <property type="match status" value="1"/>
</dbReference>
<dbReference type="PANTHER" id="PTHR43707">
    <property type="entry name" value="HISTIDYL-TRNA SYNTHETASE"/>
    <property type="match status" value="1"/>
</dbReference>
<dbReference type="Pfam" id="PF13393">
    <property type="entry name" value="tRNA-synt_His"/>
    <property type="match status" value="2"/>
</dbReference>
<dbReference type="PIRSF" id="PIRSF001549">
    <property type="entry name" value="His-tRNA_synth"/>
    <property type="match status" value="1"/>
</dbReference>
<dbReference type="SUPFAM" id="SSF55681">
    <property type="entry name" value="Class II aaRS and biotin synthetases"/>
    <property type="match status" value="1"/>
</dbReference>
<dbReference type="PROSITE" id="PS50862">
    <property type="entry name" value="AA_TRNA_LIGASE_II"/>
    <property type="match status" value="1"/>
</dbReference>
<keyword id="KW-0028">Amino-acid biosynthesis</keyword>
<keyword id="KW-0963">Cytoplasm</keyword>
<keyword id="KW-0368">Histidine biosynthesis</keyword>
<sequence>MPLINLPDFANDLIAEFVERNAERIDTPVIQPAEPFLDIAGEDLRRRIFMTESETGASLCLRPEFTIPVCLRHIETATGTPKRYAYLGEVFRQRRDGANEFYQAGIEDLGDIDLSNADARAIGDATGILARLLPGRHLAVTLGDQAVFEAVVQALGLPLGWQKRLIHAFGNMTQLEALLASLVSPQFVTGLDDDIARLVASGDEQALVAHLEREMQKTGYSTNAGRSALEIARRLKEKLILSETRLDDAAFHVLEEFLSLDVPLVNASAALSGFADAAGLKLGNALSRFNGRVAALSNAGVDLSCLDYRAAFGRPLDYYTGLVFEVTVEGSTAVLAGGGRFDRLLTFLGATDRIPAVGFSFWLDRIETERAAA</sequence>
<name>HISZ_RHIJ3</name>
<proteinExistence type="inferred from homology"/>